<name>GU03_RAT</name>
<dbReference type="PIR" id="S28997">
    <property type="entry name" value="S28997"/>
</dbReference>
<dbReference type="SMR" id="P35895"/>
<dbReference type="STRING" id="10116.ENSRNOP00000051551"/>
<dbReference type="PaxDb" id="10116-ENSRNOP00000051551"/>
<dbReference type="UCSC" id="RGD:1333466">
    <property type="organism name" value="rat"/>
</dbReference>
<dbReference type="AGR" id="RGD:1333466"/>
<dbReference type="RGD" id="1333466">
    <property type="gene designation" value="Olr1145"/>
</dbReference>
<dbReference type="eggNOG" id="ENOG502T9M5">
    <property type="taxonomic scope" value="Eukaryota"/>
</dbReference>
<dbReference type="InParanoid" id="P35895"/>
<dbReference type="PhylomeDB" id="P35895"/>
<dbReference type="Proteomes" id="UP000002494">
    <property type="component" value="Unplaced"/>
</dbReference>
<dbReference type="GO" id="GO:0005886">
    <property type="term" value="C:plasma membrane"/>
    <property type="evidence" value="ECO:0000318"/>
    <property type="project" value="GO_Central"/>
</dbReference>
<dbReference type="GO" id="GO:0004930">
    <property type="term" value="F:G protein-coupled receptor activity"/>
    <property type="evidence" value="ECO:0007669"/>
    <property type="project" value="UniProtKB-KW"/>
</dbReference>
<dbReference type="GO" id="GO:0004984">
    <property type="term" value="F:olfactory receptor activity"/>
    <property type="evidence" value="ECO:0000318"/>
    <property type="project" value="GO_Central"/>
</dbReference>
<dbReference type="GO" id="GO:0007165">
    <property type="term" value="P:signal transduction"/>
    <property type="evidence" value="ECO:0000318"/>
    <property type="project" value="GO_Central"/>
</dbReference>
<dbReference type="Gene3D" id="1.20.1070.10">
    <property type="entry name" value="Rhodopsin 7-helix transmembrane proteins"/>
    <property type="match status" value="1"/>
</dbReference>
<dbReference type="InterPro" id="IPR000276">
    <property type="entry name" value="GPCR_Rhodpsn"/>
</dbReference>
<dbReference type="InterPro" id="IPR017452">
    <property type="entry name" value="GPCR_Rhodpsn_7TM"/>
</dbReference>
<dbReference type="InterPro" id="IPR000725">
    <property type="entry name" value="Olfact_rcpt"/>
</dbReference>
<dbReference type="PANTHER" id="PTHR48001">
    <property type="entry name" value="OLFACTORY RECEPTOR"/>
    <property type="match status" value="1"/>
</dbReference>
<dbReference type="Pfam" id="PF13853">
    <property type="entry name" value="7tm_4"/>
    <property type="match status" value="1"/>
</dbReference>
<dbReference type="PRINTS" id="PR00245">
    <property type="entry name" value="OLFACTORYR"/>
</dbReference>
<dbReference type="SUPFAM" id="SSF81321">
    <property type="entry name" value="Family A G protein-coupled receptor-like"/>
    <property type="match status" value="1"/>
</dbReference>
<dbReference type="PROSITE" id="PS00237">
    <property type="entry name" value="G_PROTEIN_RECEP_F1_1"/>
    <property type="match status" value="1"/>
</dbReference>
<dbReference type="PROSITE" id="PS50262">
    <property type="entry name" value="G_PROTEIN_RECEP_F1_2"/>
    <property type="match status" value="1"/>
</dbReference>
<comment type="function">
    <text>Possible taste receptor.</text>
</comment>
<comment type="subcellular location">
    <subcellularLocation>
        <location>Cell membrane</location>
        <topology>Multi-pass membrane protein</topology>
    </subcellularLocation>
</comment>
<comment type="tissue specificity">
    <text>Tongue specific.</text>
</comment>
<comment type="similarity">
    <text evidence="2">Belongs to the G-protein coupled receptor 1 family.</text>
</comment>
<keyword id="KW-1003">Cell membrane</keyword>
<keyword id="KW-1015">Disulfide bond</keyword>
<keyword id="KW-0297">G-protein coupled receptor</keyword>
<keyword id="KW-0472">Membrane</keyword>
<keyword id="KW-0675">Receptor</keyword>
<keyword id="KW-1185">Reference proteome</keyword>
<keyword id="KW-0807">Transducer</keyword>
<keyword id="KW-0812">Transmembrane</keyword>
<keyword id="KW-1133">Transmembrane helix</keyword>
<sequence>TTVPKMLINLQKQNKAISYAGCITQLSFVLLFAGMENFLLAAMAYDRYVAICKPLRYTAIMKAHLCLVMTLLSLCISIVDALLHGLMILRLSFCTFLEIPHYFCELYQVIKLSCSDTLINNILVYTMTSTLGGVPLGGIIFSYFKIISSILRMPSSGSRHRAFSTCGS</sequence>
<evidence type="ECO:0000255" key="1"/>
<evidence type="ECO:0000255" key="2">
    <source>
        <dbReference type="PROSITE-ProRule" id="PRU00521"/>
    </source>
</evidence>
<feature type="chain" id="PRO_0000069666" description="Putative gustatory receptor clone PTE03">
    <location>
        <begin position="1" status="less than"/>
        <end position="168" status="greater than"/>
    </location>
</feature>
<feature type="topological domain" description="Extracellular" evidence="1">
    <location>
        <begin position="1" status="less than"/>
        <end position="25"/>
    </location>
</feature>
<feature type="transmembrane region" description="Helical; Name=3" evidence="1">
    <location>
        <begin position="26"/>
        <end position="45"/>
    </location>
</feature>
<feature type="topological domain" description="Cytoplasmic" evidence="1">
    <location>
        <begin position="46"/>
        <end position="67"/>
    </location>
</feature>
<feature type="transmembrane region" description="Helical; Name=4" evidence="1">
    <location>
        <begin position="68"/>
        <end position="88"/>
    </location>
</feature>
<feature type="topological domain" description="Extracellular" evidence="1">
    <location>
        <begin position="89"/>
        <end position="121"/>
    </location>
</feature>
<feature type="transmembrane region" description="Helical; Name=5" evidence="1">
    <location>
        <begin position="122"/>
        <end position="143"/>
    </location>
</feature>
<feature type="topological domain" description="Cytoplasmic" evidence="1">
    <location>
        <begin position="144"/>
        <end position="165"/>
    </location>
</feature>
<feature type="transmembrane region" description="Helical; Name=6" evidence="1">
    <location>
        <begin position="166"/>
        <end position="168" status="greater than"/>
    </location>
</feature>
<feature type="disulfide bond" evidence="2">
    <location>
        <begin position="22"/>
        <end position="104"/>
    </location>
</feature>
<feature type="non-terminal residue">
    <location>
        <position position="1"/>
    </location>
</feature>
<feature type="non-terminal residue">
    <location>
        <position position="168"/>
    </location>
</feature>
<protein>
    <recommendedName>
        <fullName>Putative gustatory receptor clone PTE03</fullName>
    </recommendedName>
</protein>
<organism>
    <name type="scientific">Rattus norvegicus</name>
    <name type="common">Rat</name>
    <dbReference type="NCBI Taxonomy" id="10116"/>
    <lineage>
        <taxon>Eukaryota</taxon>
        <taxon>Metazoa</taxon>
        <taxon>Chordata</taxon>
        <taxon>Craniata</taxon>
        <taxon>Vertebrata</taxon>
        <taxon>Euteleostomi</taxon>
        <taxon>Mammalia</taxon>
        <taxon>Eutheria</taxon>
        <taxon>Euarchontoglires</taxon>
        <taxon>Glires</taxon>
        <taxon>Rodentia</taxon>
        <taxon>Myomorpha</taxon>
        <taxon>Muroidea</taxon>
        <taxon>Muridae</taxon>
        <taxon>Murinae</taxon>
        <taxon>Rattus</taxon>
    </lineage>
</organism>
<accession>P35895</accession>
<reference key="1">
    <citation type="journal article" date="1993" name="FEBS Lett.">
        <title>Multiple genes for G protein-coupled receptors and their expression in lingual epithelia.</title>
        <authorList>
            <person name="Abe K."/>
            <person name="Kusakabe Y."/>
            <person name="Tanemura K."/>
            <person name="Emori Y."/>
            <person name="Arai S."/>
        </authorList>
    </citation>
    <scope>NUCLEOTIDE SEQUENCE [MRNA]</scope>
    <source>
        <strain>Fischer</strain>
        <tissue>Tongue epithelium</tissue>
    </source>
</reference>
<gene>
    <name type="primary">Olr1145</name>
</gene>
<proteinExistence type="evidence at transcript level"/>